<proteinExistence type="evidence at protein level"/>
<feature type="chain" id="PRO_0000437998" description="Menaquinone reductase, multiheme cytochrome c subunit">
    <location>
        <begin position="1"/>
        <end position="210"/>
    </location>
</feature>
<feature type="transmembrane region" description="Helical" evidence="2">
    <location>
        <begin position="20"/>
        <end position="40"/>
    </location>
</feature>
<feature type="binding site" description="covalent" evidence="1 7">
    <location>
        <position position="67"/>
    </location>
    <ligand>
        <name>heme</name>
        <dbReference type="ChEBI" id="CHEBI:30413"/>
        <label>1</label>
    </ligand>
</feature>
<feature type="binding site" description="covalent" evidence="1 7">
    <location>
        <position position="70"/>
    </location>
    <ligand>
        <name>heme</name>
        <dbReference type="ChEBI" id="CHEBI:30413"/>
        <label>1</label>
    </ligand>
</feature>
<feature type="binding site" description="axial binding residue" evidence="1 7">
    <location>
        <position position="71"/>
    </location>
    <ligand>
        <name>heme</name>
        <dbReference type="ChEBI" id="CHEBI:30413"/>
        <label>1</label>
    </ligand>
    <ligandPart>
        <name>Fe</name>
        <dbReference type="ChEBI" id="CHEBI:18248"/>
    </ligandPart>
</feature>
<feature type="binding site" description="covalent" evidence="7">
    <location>
        <position position="88"/>
    </location>
    <ligand>
        <name>heme</name>
        <dbReference type="ChEBI" id="CHEBI:30413"/>
        <label>2</label>
    </ligand>
</feature>
<feature type="binding site" description="covalent" evidence="7">
    <location>
        <position position="91"/>
    </location>
    <ligand>
        <name>heme</name>
        <dbReference type="ChEBI" id="CHEBI:30413"/>
        <label>2</label>
    </ligand>
</feature>
<feature type="binding site" description="axial binding residue" evidence="7">
    <location>
        <position position="92"/>
    </location>
    <ligand>
        <name>heme</name>
        <dbReference type="ChEBI" id="CHEBI:30413"/>
        <label>2</label>
    </ligand>
    <ligandPart>
        <name>Fe</name>
        <dbReference type="ChEBI" id="CHEBI:18248"/>
    </ligandPart>
</feature>
<feature type="binding site" description="covalent" evidence="1 7">
    <location>
        <position position="140"/>
    </location>
    <ligand>
        <name>heme</name>
        <dbReference type="ChEBI" id="CHEBI:30413"/>
        <label>3</label>
    </ligand>
</feature>
<feature type="binding site" description="covalent" evidence="1 7">
    <location>
        <position position="143"/>
    </location>
    <ligand>
        <name>heme</name>
        <dbReference type="ChEBI" id="CHEBI:30413"/>
        <label>3</label>
    </ligand>
</feature>
<feature type="binding site" description="axial binding residue" evidence="1 7">
    <location>
        <position position="144"/>
    </location>
    <ligand>
        <name>heme</name>
        <dbReference type="ChEBI" id="CHEBI:30413"/>
        <label>3</label>
    </ligand>
    <ligandPart>
        <name>Fe</name>
        <dbReference type="ChEBI" id="CHEBI:18248"/>
    </ligandPart>
</feature>
<feature type="binding site" description="covalent" evidence="7">
    <location>
        <position position="152"/>
    </location>
    <ligand>
        <name>heme</name>
        <dbReference type="ChEBI" id="CHEBI:30413"/>
        <label>4</label>
    </ligand>
</feature>
<feature type="binding site" description="covalent" evidence="7">
    <location>
        <position position="155"/>
    </location>
    <ligand>
        <name>heme</name>
        <dbReference type="ChEBI" id="CHEBI:30413"/>
        <label>4</label>
    </ligand>
</feature>
<feature type="binding site" description="axial binding residue" evidence="7">
    <location>
        <position position="156"/>
    </location>
    <ligand>
        <name>heme</name>
        <dbReference type="ChEBI" id="CHEBI:30413"/>
        <label>4</label>
    </ligand>
    <ligandPart>
        <name>Fe</name>
        <dbReference type="ChEBI" id="CHEBI:18248"/>
    </ligandPart>
</feature>
<feature type="binding site" description="covalent" evidence="1 7">
    <location>
        <position position="186"/>
    </location>
    <ligand>
        <name>heme</name>
        <dbReference type="ChEBI" id="CHEBI:30413"/>
        <label>5</label>
    </ligand>
</feature>
<feature type="binding site" description="covalent" evidence="7">
    <location>
        <position position="189"/>
    </location>
    <ligand>
        <name>heme</name>
        <dbReference type="ChEBI" id="CHEBI:30413"/>
        <label>5</label>
    </ligand>
</feature>
<feature type="binding site" description="axial binding residue" evidence="7">
    <location>
        <position position="190"/>
    </location>
    <ligand>
        <name>heme</name>
        <dbReference type="ChEBI" id="CHEBI:30413"/>
        <label>5</label>
    </ligand>
    <ligandPart>
        <name>Fe</name>
        <dbReference type="ChEBI" id="CHEBI:18248"/>
    </ligandPart>
</feature>
<feature type="binding site" description="covalent" evidence="1 7">
    <location>
        <position position="205"/>
    </location>
    <ligand>
        <name>heme</name>
        <dbReference type="ChEBI" id="CHEBI:30413"/>
        <label>6</label>
    </ligand>
</feature>
<feature type="binding site" description="covalent" evidence="1 7">
    <location>
        <position position="208"/>
    </location>
    <ligand>
        <name>heme</name>
        <dbReference type="ChEBI" id="CHEBI:30413"/>
        <label>6</label>
    </ligand>
</feature>
<feature type="binding site" description="axial binding residue" evidence="1 7">
    <location>
        <position position="209"/>
    </location>
    <ligand>
        <name>heme</name>
        <dbReference type="ChEBI" id="CHEBI:30413"/>
        <label>6</label>
    </ligand>
    <ligandPart>
        <name>Fe</name>
        <dbReference type="ChEBI" id="CHEBI:18248"/>
    </ligandPart>
</feature>
<accession>P0DOV3</accession>
<organism>
    <name type="scientific">Nitratidesulfovibrio vulgaris (strain ATCC 29579 / DSM 644 / CCUG 34227 / NCIMB 8303 / VKM B-1760 / Hildenborough)</name>
    <name type="common">Desulfovibrio vulgaris</name>
    <dbReference type="NCBI Taxonomy" id="882"/>
    <lineage>
        <taxon>Bacteria</taxon>
        <taxon>Pseudomonadati</taxon>
        <taxon>Thermodesulfobacteriota</taxon>
        <taxon>Desulfovibrionia</taxon>
        <taxon>Desulfovibrionales</taxon>
        <taxon>Desulfovibrionaceae</taxon>
        <taxon>Nitratidesulfovibrio</taxon>
    </lineage>
</organism>
<sequence length="210" mass="23605">MEDRQLTNADNENGRKCACGGAAPFFVGLVVALVFGWWAFPEMLYSQKEQPIRFSHKVHVNDAGMECKQCHSLREDGSFAGLPSTASCAECHSDVLGSDPEEARFVAEYVKSGKEVKWLVYQYQPDNVFFSHAAHSLDGCNQCHQFSERELCNLCHLDVADSDKAPTHYENKLTGYSKQTMKMWQCERCHANENHLGVTNSSNACFVCHK</sequence>
<evidence type="ECO:0000250" key="1">
    <source>
        <dbReference type="UniProtKB" id="Q7MSJ8"/>
    </source>
</evidence>
<evidence type="ECO:0000255" key="2"/>
<evidence type="ECO:0000269" key="3">
    <source>
    </source>
</evidence>
<evidence type="ECO:0000269" key="4">
    <source>
    </source>
</evidence>
<evidence type="ECO:0000303" key="5">
    <source>
    </source>
</evidence>
<evidence type="ECO:0000305" key="6"/>
<evidence type="ECO:0000305" key="7">
    <source>
    </source>
</evidence>
<dbReference type="EC" id="1.97.-.-"/>
<dbReference type="EMBL" id="AE017285">
    <property type="status" value="NOT_ANNOTATED_CDS"/>
    <property type="molecule type" value="Genomic_DNA"/>
</dbReference>
<dbReference type="RefSeq" id="WP_010940677.1">
    <property type="nucleotide sequence ID" value="NC_002937.3"/>
</dbReference>
<dbReference type="RefSeq" id="YP_003858606.1">
    <property type="nucleotide sequence ID" value="NC_002937.3"/>
</dbReference>
<dbReference type="OrthoDB" id="9814800at2"/>
<dbReference type="BioCyc" id="MetaCyc:MONOMER-22154"/>
<dbReference type="Proteomes" id="UP000002194">
    <property type="component" value="Chromosome"/>
</dbReference>
<dbReference type="GO" id="GO:0005886">
    <property type="term" value="C:plasma membrane"/>
    <property type="evidence" value="ECO:0007669"/>
    <property type="project" value="UniProtKB-SubCell"/>
</dbReference>
<dbReference type="GO" id="GO:0009055">
    <property type="term" value="F:electron transfer activity"/>
    <property type="evidence" value="ECO:0007669"/>
    <property type="project" value="InterPro"/>
</dbReference>
<dbReference type="GO" id="GO:0020037">
    <property type="term" value="F:heme binding"/>
    <property type="evidence" value="ECO:0007669"/>
    <property type="project" value="InterPro"/>
</dbReference>
<dbReference type="GO" id="GO:0046872">
    <property type="term" value="F:metal ion binding"/>
    <property type="evidence" value="ECO:0007669"/>
    <property type="project" value="UniProtKB-KW"/>
</dbReference>
<dbReference type="GO" id="GO:0016491">
    <property type="term" value="F:oxidoreductase activity"/>
    <property type="evidence" value="ECO:0007669"/>
    <property type="project" value="UniProtKB-KW"/>
</dbReference>
<dbReference type="GO" id="GO:0009061">
    <property type="term" value="P:anaerobic respiration"/>
    <property type="evidence" value="ECO:0007669"/>
    <property type="project" value="UniProtKB-KW"/>
</dbReference>
<dbReference type="CDD" id="cd08168">
    <property type="entry name" value="Cytochrom_C3"/>
    <property type="match status" value="1"/>
</dbReference>
<dbReference type="Gene3D" id="3.90.10.10">
    <property type="entry name" value="Cytochrome C3"/>
    <property type="match status" value="2"/>
</dbReference>
<dbReference type="InterPro" id="IPR020942">
    <property type="entry name" value="Cyt_c_III_dom"/>
</dbReference>
<dbReference type="InterPro" id="IPR036280">
    <property type="entry name" value="Multihaem_cyt_sf"/>
</dbReference>
<dbReference type="InterPro" id="IPR053547">
    <property type="entry name" value="Multiheme_cyt_c_menaq_reduct"/>
</dbReference>
<dbReference type="NCBIfam" id="NF041781">
    <property type="entry name" value="mnquin_red_QrcA"/>
    <property type="match status" value="1"/>
</dbReference>
<dbReference type="PANTHER" id="PTHR39425:SF1">
    <property type="entry name" value="CYTOCHROME C7-LIKE DOMAIN-CONTAINING PROTEIN"/>
    <property type="match status" value="1"/>
</dbReference>
<dbReference type="PANTHER" id="PTHR39425">
    <property type="entry name" value="LIPOPROTEIN CYTOCHROME C"/>
    <property type="match status" value="1"/>
</dbReference>
<dbReference type="Pfam" id="PF02085">
    <property type="entry name" value="Cytochrom_CIII"/>
    <property type="match status" value="1"/>
</dbReference>
<dbReference type="SUPFAM" id="SSF48695">
    <property type="entry name" value="Multiheme cytochromes"/>
    <property type="match status" value="1"/>
</dbReference>
<dbReference type="PROSITE" id="PS51008">
    <property type="entry name" value="MULTIHEME_CYTC"/>
    <property type="match status" value="1"/>
</dbReference>
<protein>
    <recommendedName>
        <fullName evidence="7">Menaquinone reductase, multiheme cytochrome c subunit</fullName>
        <ecNumber>1.97.-.-</ecNumber>
    </recommendedName>
    <alternativeName>
        <fullName evidence="5">Quinone reductase complex subunit A</fullName>
    </alternativeName>
    <alternativeName>
        <fullName evidence="5">Type I cytochrome c3:menaquinone oxidoreductase subunit A</fullName>
    </alternativeName>
</protein>
<reference key="1">
    <citation type="journal article" date="2004" name="Nat. Biotechnol.">
        <title>The genome sequence of the anaerobic, sulfate-reducing bacterium Desulfovibrio vulgaris Hildenborough.</title>
        <authorList>
            <person name="Heidelberg J.F."/>
            <person name="Seshadri R."/>
            <person name="Haveman S.A."/>
            <person name="Hemme C.L."/>
            <person name="Paulsen I.T."/>
            <person name="Kolonay J.F."/>
            <person name="Eisen J.A."/>
            <person name="Ward N.L."/>
            <person name="Methe B.A."/>
            <person name="Brinkac L.M."/>
            <person name="Daugherty S.C."/>
            <person name="DeBoy R.T."/>
            <person name="Dodson R.J."/>
            <person name="Durkin A.S."/>
            <person name="Madupu R."/>
            <person name="Nelson W.C."/>
            <person name="Sullivan S.A."/>
            <person name="Fouts D.E."/>
            <person name="Haft D.H."/>
            <person name="Selengut J."/>
            <person name="Peterson J.D."/>
            <person name="Davidsen T.M."/>
            <person name="Zafar N."/>
            <person name="Zhou L."/>
            <person name="Radune D."/>
            <person name="Dimitrov G."/>
            <person name="Hance M."/>
            <person name="Tran K."/>
            <person name="Khouri H.M."/>
            <person name="Gill J."/>
            <person name="Utterback T.R."/>
            <person name="Feldblyum T.V."/>
            <person name="Wall J.D."/>
            <person name="Voordouw G."/>
            <person name="Fraser C.M."/>
        </authorList>
    </citation>
    <scope>NUCLEOTIDE SEQUENCE [LARGE SCALE GENOMIC DNA]</scope>
    <source>
        <strain>ATCC 29579 / DSM 644 / CCUG 34227 / NCIMB 8303 / VKM B-1760 / Hildenborough</strain>
    </source>
</reference>
<reference key="2">
    <citation type="journal article" date="2010" name="J. Biol. Chem.">
        <title>The Qrc membrane complex, related to the alternative complex III, is a menaquinone reductase involved in sulfate respiration.</title>
        <authorList>
            <person name="Venceslau S.S."/>
            <person name="Lino R.R."/>
            <person name="Pereira I.A."/>
        </authorList>
    </citation>
    <scope>PROTEIN SEQUENCE OF 1-5</scope>
    <scope>FUNCTION</scope>
    <scope>CATALYTIC ACTIVITY</scope>
    <scope>COFACTOR</scope>
    <scope>BIOPHYSICOCHEMICAL PROPERTIES</scope>
    <scope>SUBUNIT</scope>
    <scope>SUBCELLULAR LOCATION</scope>
    <source>
        <strain>ATCC 29579 / DSM 644 / CCUG 34227 / NCIMB 8303 / VKM B-1760 / Hildenborough</strain>
    </source>
</reference>
<reference key="3">
    <citation type="journal article" date="2011" name="FEBS Lett.">
        <title>EPR characterization of the new Qrc complex from sulfate reducing bacteria and its ability to form a supercomplex with hydrogenase and TpIc3.</title>
        <authorList>
            <person name="Venceslau S.S."/>
            <person name="Matos D."/>
            <person name="Pereira I.A."/>
        </authorList>
    </citation>
    <scope>INTERACTION WITH [NIFE] HYDROGENASE AND TPIC(3)</scope>
    <scope>COFACTOR</scope>
    <source>
        <strain>ATCC 29579 / DSM 644 / CCUG 34227 / NCIMB 8303 / VKM B-1760 / Hildenborough</strain>
    </source>
</reference>
<gene>
    <name evidence="5" type="primary">qrcA</name>
    <name evidence="6" type="ordered locus">DVU_0695.1</name>
</gene>
<keyword id="KW-0997">Cell inner membrane</keyword>
<keyword id="KW-1003">Cell membrane</keyword>
<keyword id="KW-0903">Direct protein sequencing</keyword>
<keyword id="KW-0249">Electron transport</keyword>
<keyword id="KW-0349">Heme</keyword>
<keyword id="KW-0408">Iron</keyword>
<keyword id="KW-0472">Membrane</keyword>
<keyword id="KW-0479">Metal-binding</keyword>
<keyword id="KW-0560">Oxidoreductase</keyword>
<keyword id="KW-1185">Reference proteome</keyword>
<keyword id="KW-0763">Sulfate respiration</keyword>
<keyword id="KW-0812">Transmembrane</keyword>
<keyword id="KW-1133">Transmembrane helix</keyword>
<keyword id="KW-0813">Transport</keyword>
<comment type="function">
    <text evidence="3">Component of the respiratory Qrc complex, that catalyzes the reduction of the menaquinone pool using electrons transferred from the reduced periplasmic cytochrome c3, and which is probably involved in sulfate respiration. Is likely essential for growth on H(2) or formate since the periplasmic hydrogenases and/or formate dehydrogenases act as primary electron donors for the Qrc complex.</text>
</comment>
<comment type="cofactor">
    <cofactor evidence="3 4">
        <name>heme c</name>
        <dbReference type="ChEBI" id="CHEBI:61717"/>
    </cofactor>
    <text evidence="3">Binds 6 heme c groups covalently per subunit.</text>
</comment>
<comment type="biophysicochemical properties">
    <kinetics>
        <KM evidence="3">0.8 uM for the cytochrome c3</KM>
        <KM evidence="3">4 uM for menaquinone-4</KM>
        <Vmax evidence="3">92.0 nmol/min/mg enzyme</Vmax>
        <text evidence="3">kcat is 16.6 min(-1). Values are measured with the whole Qrc complex.</text>
    </kinetics>
</comment>
<comment type="subunit">
    <text evidence="3 4">The Qrc complex is composed of four subunits: QrcA, QrcB, QrcC and QrcD (PubMed:20498375). Can form a supercomplex with the [NiFe] hydrogenase HynA1 and the tetraheme Type I cytochrome c3 TpIc(3), its physiological electron donors (PubMed:21651911).</text>
</comment>
<comment type="subcellular location">
    <subcellularLocation>
        <location evidence="7">Cell inner membrane</location>
        <topology evidence="2 7">Single-pass membrane protein</topology>
        <orientation evidence="7">Periplasmic side</orientation>
    </subcellularLocation>
</comment>
<comment type="similarity">
    <text evidence="6">Belongs to the multiheme cytochrome c family.</text>
</comment>
<name>QRCA_NITV2</name>